<gene>
    <name evidence="1" type="primary">atpH</name>
    <name type="ordered locus">MSC_0888</name>
</gene>
<organism>
    <name type="scientific">Mycoplasma mycoides subsp. mycoides SC (strain CCUG 32753 / NCTC 10114 / PG1)</name>
    <dbReference type="NCBI Taxonomy" id="272632"/>
    <lineage>
        <taxon>Bacteria</taxon>
        <taxon>Bacillati</taxon>
        <taxon>Mycoplasmatota</taxon>
        <taxon>Mollicutes</taxon>
        <taxon>Mycoplasmataceae</taxon>
        <taxon>Mycoplasma</taxon>
    </lineage>
</organism>
<name>ATPD_MYCMS</name>
<dbReference type="EMBL" id="BX293980">
    <property type="protein sequence ID" value="CAE77499.1"/>
    <property type="molecule type" value="Genomic_DNA"/>
</dbReference>
<dbReference type="RefSeq" id="NP_975857.1">
    <property type="nucleotide sequence ID" value="NC_005364.2"/>
</dbReference>
<dbReference type="RefSeq" id="WP_011167041.1">
    <property type="nucleotide sequence ID" value="NC_005364.2"/>
</dbReference>
<dbReference type="SMR" id="Q6MS91"/>
<dbReference type="STRING" id="272632.MSC_0888"/>
<dbReference type="KEGG" id="mmy:MSC_0888"/>
<dbReference type="PATRIC" id="fig|272632.4.peg.960"/>
<dbReference type="eggNOG" id="COG0712">
    <property type="taxonomic scope" value="Bacteria"/>
</dbReference>
<dbReference type="HOGENOM" id="CLU_085114_4_2_14"/>
<dbReference type="Proteomes" id="UP000001016">
    <property type="component" value="Chromosome"/>
</dbReference>
<dbReference type="GO" id="GO:0005886">
    <property type="term" value="C:plasma membrane"/>
    <property type="evidence" value="ECO:0007669"/>
    <property type="project" value="UniProtKB-SubCell"/>
</dbReference>
<dbReference type="GO" id="GO:0045259">
    <property type="term" value="C:proton-transporting ATP synthase complex"/>
    <property type="evidence" value="ECO:0007669"/>
    <property type="project" value="UniProtKB-KW"/>
</dbReference>
<dbReference type="GO" id="GO:0046933">
    <property type="term" value="F:proton-transporting ATP synthase activity, rotational mechanism"/>
    <property type="evidence" value="ECO:0007669"/>
    <property type="project" value="UniProtKB-UniRule"/>
</dbReference>
<dbReference type="Gene3D" id="1.10.520.20">
    <property type="entry name" value="N-terminal domain of the delta subunit of the F1F0-ATP synthase"/>
    <property type="match status" value="1"/>
</dbReference>
<dbReference type="HAMAP" id="MF_01416">
    <property type="entry name" value="ATP_synth_delta_bact"/>
    <property type="match status" value="1"/>
</dbReference>
<dbReference type="InterPro" id="IPR026015">
    <property type="entry name" value="ATP_synth_OSCP/delta_N_sf"/>
</dbReference>
<dbReference type="InterPro" id="IPR000711">
    <property type="entry name" value="ATPase_OSCP/dsu"/>
</dbReference>
<dbReference type="NCBIfam" id="TIGR01145">
    <property type="entry name" value="ATP_synt_delta"/>
    <property type="match status" value="1"/>
</dbReference>
<dbReference type="NCBIfam" id="NF009975">
    <property type="entry name" value="PRK13436.1"/>
    <property type="match status" value="1"/>
</dbReference>
<dbReference type="PANTHER" id="PTHR11910">
    <property type="entry name" value="ATP SYNTHASE DELTA CHAIN"/>
    <property type="match status" value="1"/>
</dbReference>
<dbReference type="Pfam" id="PF00213">
    <property type="entry name" value="OSCP"/>
    <property type="match status" value="1"/>
</dbReference>
<dbReference type="PRINTS" id="PR00125">
    <property type="entry name" value="ATPASEDELTA"/>
</dbReference>
<dbReference type="SUPFAM" id="SSF47928">
    <property type="entry name" value="N-terminal domain of the delta subunit of the F1F0-ATP synthase"/>
    <property type="match status" value="1"/>
</dbReference>
<comment type="function">
    <text evidence="1">F(1)F(0) ATP synthase produces ATP from ADP in the presence of a proton or sodium gradient. F-type ATPases consist of two structural domains, F(1) containing the extramembraneous catalytic core and F(0) containing the membrane proton channel, linked together by a central stalk and a peripheral stalk. During catalysis, ATP synthesis in the catalytic domain of F(1) is coupled via a rotary mechanism of the central stalk subunits to proton translocation.</text>
</comment>
<comment type="function">
    <text evidence="1">This protein is part of the stalk that links CF(0) to CF(1). It either transmits conformational changes from CF(0) to CF(1) or is implicated in proton conduction.</text>
</comment>
<comment type="subunit">
    <text evidence="1">F-type ATPases have 2 components, F(1) - the catalytic core - and F(0) - the membrane proton channel. F(1) has five subunits: alpha(3), beta(3), gamma(1), delta(1), epsilon(1). F(0) has three main subunits: a(1), b(2) and c(10-14). The alpha and beta chains form an alternating ring which encloses part of the gamma chain. F(1) is attached to F(0) by a central stalk formed by the gamma and epsilon chains, while a peripheral stalk is formed by the delta and b chains.</text>
</comment>
<comment type="subcellular location">
    <subcellularLocation>
        <location evidence="1">Cell membrane</location>
        <topology evidence="1">Peripheral membrane protein</topology>
    </subcellularLocation>
</comment>
<comment type="similarity">
    <text evidence="1">Belongs to the ATPase delta chain family.</text>
</comment>
<feature type="chain" id="PRO_0000382125" description="ATP synthase subunit delta">
    <location>
        <begin position="1"/>
        <end position="181"/>
    </location>
</feature>
<protein>
    <recommendedName>
        <fullName evidence="1">ATP synthase subunit delta</fullName>
    </recommendedName>
    <alternativeName>
        <fullName evidence="1">ATP synthase F(1) sector subunit delta</fullName>
    </alternativeName>
    <alternativeName>
        <fullName evidence="1">F-type ATPase subunit delta</fullName>
        <shortName evidence="1">F-ATPase subunit delta</shortName>
    </alternativeName>
</protein>
<evidence type="ECO:0000255" key="1">
    <source>
        <dbReference type="HAMAP-Rule" id="MF_01416"/>
    </source>
</evidence>
<reference key="1">
    <citation type="journal article" date="2004" name="Genome Res.">
        <title>The genome sequence of Mycoplasma mycoides subsp. mycoides SC type strain PG1T, the causative agent of contagious bovine pleuropneumonia (CBPP).</title>
        <authorList>
            <person name="Westberg J."/>
            <person name="Persson A."/>
            <person name="Holmberg A."/>
            <person name="Goesmann A."/>
            <person name="Lundeberg J."/>
            <person name="Johansson K.-E."/>
            <person name="Pettersson B."/>
            <person name="Uhlen M."/>
        </authorList>
    </citation>
    <scope>NUCLEOTIDE SEQUENCE [LARGE SCALE GENOMIC DNA]</scope>
    <source>
        <strain>CCUG 32753 / NCTC 10114 / PG1</strain>
    </source>
</reference>
<sequence length="181" mass="20620">MILKETTINNYATALFNIAVKEKLVDDYIIQVDALIKSLADKDEFNKLVTYSNKEQKKQAILIIENTFSSFGFDIYLINALKILVENQLFINTRMILKVLYKKLLAYKNIVLGEVYSTEKLTKTQLNAIKKKISNKVNKKVELVNKIDPTLIGGIKVSVEDKVFDGSIKAKLEALKKQMNT</sequence>
<keyword id="KW-0066">ATP synthesis</keyword>
<keyword id="KW-1003">Cell membrane</keyword>
<keyword id="KW-0139">CF(1)</keyword>
<keyword id="KW-0375">Hydrogen ion transport</keyword>
<keyword id="KW-0406">Ion transport</keyword>
<keyword id="KW-0472">Membrane</keyword>
<keyword id="KW-1185">Reference proteome</keyword>
<keyword id="KW-0813">Transport</keyword>
<accession>Q6MS91</accession>
<proteinExistence type="inferred from homology"/>